<comment type="function">
    <text evidence="1">One of two assembly initiator proteins, it binds directly to the 5'-end of the 23S rRNA, where it nucleates assembly of the 50S subunit.</text>
</comment>
<comment type="function">
    <text evidence="1">One of the proteins that surrounds the polypeptide exit tunnel on the outside of the subunit.</text>
</comment>
<comment type="subunit">
    <text evidence="1">Part of the 50S ribosomal subunit.</text>
</comment>
<comment type="similarity">
    <text evidence="1">Belongs to the universal ribosomal protein uL24 family.</text>
</comment>
<evidence type="ECO:0000255" key="1">
    <source>
        <dbReference type="HAMAP-Rule" id="MF_01326"/>
    </source>
</evidence>
<evidence type="ECO:0000305" key="2"/>
<feature type="chain" id="PRO_0000241643" description="Large ribosomal subunit protein uL24">
    <location>
        <begin position="1"/>
        <end position="104"/>
    </location>
</feature>
<sequence>MQKIRRDDEIIVIAGKDKGKRGKVLKVLADDRLVVGGINLVKRHTKPNPMSGVQGGIVEKEAPLHASNVAIFNGATNKADRVGFKVEDGKKIRVFKSTQKAVDA</sequence>
<accession>Q48D47</accession>
<keyword id="KW-0687">Ribonucleoprotein</keyword>
<keyword id="KW-0689">Ribosomal protein</keyword>
<keyword id="KW-0694">RNA-binding</keyword>
<keyword id="KW-0699">rRNA-binding</keyword>
<gene>
    <name evidence="1" type="primary">rplX</name>
    <name type="ordered locus">PSPPH_4581</name>
</gene>
<dbReference type="EMBL" id="CP000058">
    <property type="protein sequence ID" value="AAZ33037.1"/>
    <property type="molecule type" value="Genomic_DNA"/>
</dbReference>
<dbReference type="RefSeq" id="WP_002555478.1">
    <property type="nucleotide sequence ID" value="NC_005773.3"/>
</dbReference>
<dbReference type="SMR" id="Q48D47"/>
<dbReference type="GeneID" id="96221019"/>
<dbReference type="KEGG" id="psp:PSPPH_4581"/>
<dbReference type="eggNOG" id="COG0198">
    <property type="taxonomic scope" value="Bacteria"/>
</dbReference>
<dbReference type="HOGENOM" id="CLU_093315_2_2_6"/>
<dbReference type="Proteomes" id="UP000000551">
    <property type="component" value="Chromosome"/>
</dbReference>
<dbReference type="GO" id="GO:1990904">
    <property type="term" value="C:ribonucleoprotein complex"/>
    <property type="evidence" value="ECO:0007669"/>
    <property type="project" value="UniProtKB-KW"/>
</dbReference>
<dbReference type="GO" id="GO:0005840">
    <property type="term" value="C:ribosome"/>
    <property type="evidence" value="ECO:0007669"/>
    <property type="project" value="UniProtKB-KW"/>
</dbReference>
<dbReference type="GO" id="GO:0019843">
    <property type="term" value="F:rRNA binding"/>
    <property type="evidence" value="ECO:0007669"/>
    <property type="project" value="UniProtKB-UniRule"/>
</dbReference>
<dbReference type="GO" id="GO:0003735">
    <property type="term" value="F:structural constituent of ribosome"/>
    <property type="evidence" value="ECO:0007669"/>
    <property type="project" value="InterPro"/>
</dbReference>
<dbReference type="GO" id="GO:0006412">
    <property type="term" value="P:translation"/>
    <property type="evidence" value="ECO:0007669"/>
    <property type="project" value="UniProtKB-UniRule"/>
</dbReference>
<dbReference type="CDD" id="cd06089">
    <property type="entry name" value="KOW_RPL26"/>
    <property type="match status" value="1"/>
</dbReference>
<dbReference type="FunFam" id="2.30.30.30:FF:000004">
    <property type="entry name" value="50S ribosomal protein L24"/>
    <property type="match status" value="1"/>
</dbReference>
<dbReference type="Gene3D" id="2.30.30.30">
    <property type="match status" value="1"/>
</dbReference>
<dbReference type="HAMAP" id="MF_01326_B">
    <property type="entry name" value="Ribosomal_uL24_B"/>
    <property type="match status" value="1"/>
</dbReference>
<dbReference type="InterPro" id="IPR005824">
    <property type="entry name" value="KOW"/>
</dbReference>
<dbReference type="InterPro" id="IPR014722">
    <property type="entry name" value="Rib_uL2_dom2"/>
</dbReference>
<dbReference type="InterPro" id="IPR003256">
    <property type="entry name" value="Ribosomal_uL24"/>
</dbReference>
<dbReference type="InterPro" id="IPR005825">
    <property type="entry name" value="Ribosomal_uL24_CS"/>
</dbReference>
<dbReference type="InterPro" id="IPR041988">
    <property type="entry name" value="Ribosomal_uL24_KOW"/>
</dbReference>
<dbReference type="InterPro" id="IPR008991">
    <property type="entry name" value="Translation_prot_SH3-like_sf"/>
</dbReference>
<dbReference type="NCBIfam" id="TIGR01079">
    <property type="entry name" value="rplX_bact"/>
    <property type="match status" value="1"/>
</dbReference>
<dbReference type="PANTHER" id="PTHR12903">
    <property type="entry name" value="MITOCHONDRIAL RIBOSOMAL PROTEIN L24"/>
    <property type="match status" value="1"/>
</dbReference>
<dbReference type="Pfam" id="PF00467">
    <property type="entry name" value="KOW"/>
    <property type="match status" value="1"/>
</dbReference>
<dbReference type="Pfam" id="PF17136">
    <property type="entry name" value="ribosomal_L24"/>
    <property type="match status" value="1"/>
</dbReference>
<dbReference type="SMART" id="SM00739">
    <property type="entry name" value="KOW"/>
    <property type="match status" value="1"/>
</dbReference>
<dbReference type="SUPFAM" id="SSF50104">
    <property type="entry name" value="Translation proteins SH3-like domain"/>
    <property type="match status" value="1"/>
</dbReference>
<dbReference type="PROSITE" id="PS01108">
    <property type="entry name" value="RIBOSOMAL_L24"/>
    <property type="match status" value="1"/>
</dbReference>
<name>RL24_PSE14</name>
<organism>
    <name type="scientific">Pseudomonas savastanoi pv. phaseolicola (strain 1448A / Race 6)</name>
    <name type="common">Pseudomonas syringae pv. phaseolicola (strain 1448A / Race 6)</name>
    <dbReference type="NCBI Taxonomy" id="264730"/>
    <lineage>
        <taxon>Bacteria</taxon>
        <taxon>Pseudomonadati</taxon>
        <taxon>Pseudomonadota</taxon>
        <taxon>Gammaproteobacteria</taxon>
        <taxon>Pseudomonadales</taxon>
        <taxon>Pseudomonadaceae</taxon>
        <taxon>Pseudomonas</taxon>
    </lineage>
</organism>
<proteinExistence type="inferred from homology"/>
<protein>
    <recommendedName>
        <fullName evidence="1">Large ribosomal subunit protein uL24</fullName>
    </recommendedName>
    <alternativeName>
        <fullName evidence="2">50S ribosomal protein L24</fullName>
    </alternativeName>
</protein>
<reference key="1">
    <citation type="journal article" date="2005" name="J. Bacteriol.">
        <title>Whole-genome sequence analysis of Pseudomonas syringae pv. phaseolicola 1448A reveals divergence among pathovars in genes involved in virulence and transposition.</title>
        <authorList>
            <person name="Joardar V."/>
            <person name="Lindeberg M."/>
            <person name="Jackson R.W."/>
            <person name="Selengut J."/>
            <person name="Dodson R."/>
            <person name="Brinkac L.M."/>
            <person name="Daugherty S.C."/>
            <person name="DeBoy R.T."/>
            <person name="Durkin A.S."/>
            <person name="Gwinn Giglio M."/>
            <person name="Madupu R."/>
            <person name="Nelson W.C."/>
            <person name="Rosovitz M.J."/>
            <person name="Sullivan S.A."/>
            <person name="Crabtree J."/>
            <person name="Creasy T."/>
            <person name="Davidsen T.M."/>
            <person name="Haft D.H."/>
            <person name="Zafar N."/>
            <person name="Zhou L."/>
            <person name="Halpin R."/>
            <person name="Holley T."/>
            <person name="Khouri H.M."/>
            <person name="Feldblyum T.V."/>
            <person name="White O."/>
            <person name="Fraser C.M."/>
            <person name="Chatterjee A.K."/>
            <person name="Cartinhour S."/>
            <person name="Schneider D."/>
            <person name="Mansfield J.W."/>
            <person name="Collmer A."/>
            <person name="Buell R."/>
        </authorList>
    </citation>
    <scope>NUCLEOTIDE SEQUENCE [LARGE SCALE GENOMIC DNA]</scope>
    <source>
        <strain>1448A / Race 6</strain>
    </source>
</reference>